<feature type="chain" id="PRO_0000172559" description="Phosphatidylglycerol--prolipoprotein diacylglyceryl transferase">
    <location>
        <begin position="1"/>
        <end position="292"/>
    </location>
</feature>
<feature type="transmembrane region" description="Helical" evidence="1">
    <location>
        <begin position="25"/>
        <end position="45"/>
    </location>
</feature>
<feature type="transmembrane region" description="Helical" evidence="1">
    <location>
        <begin position="70"/>
        <end position="90"/>
    </location>
</feature>
<feature type="transmembrane region" description="Helical" evidence="1">
    <location>
        <begin position="101"/>
        <end position="121"/>
    </location>
</feature>
<feature type="transmembrane region" description="Helical" evidence="1">
    <location>
        <begin position="138"/>
        <end position="158"/>
    </location>
</feature>
<feature type="transmembrane region" description="Helical" evidence="1">
    <location>
        <begin position="193"/>
        <end position="213"/>
    </location>
</feature>
<feature type="transmembrane region" description="Helical" evidence="1">
    <location>
        <begin position="255"/>
        <end position="275"/>
    </location>
</feature>
<feature type="binding site" evidence="1">
    <location>
        <position position="153"/>
    </location>
    <ligand>
        <name>a 1,2-diacyl-sn-glycero-3-phospho-(1'-sn-glycerol)</name>
        <dbReference type="ChEBI" id="CHEBI:64716"/>
    </ligand>
</feature>
<gene>
    <name evidence="1" type="primary">lgt</name>
    <name type="ordered locus">BQ03340</name>
</gene>
<reference key="1">
    <citation type="journal article" date="2004" name="Proc. Natl. Acad. Sci. U.S.A.">
        <title>The louse-borne human pathogen Bartonella quintana is a genomic derivative of the zoonotic agent Bartonella henselae.</title>
        <authorList>
            <person name="Alsmark U.C.M."/>
            <person name="Frank A.C."/>
            <person name="Karlberg E.O."/>
            <person name="Legault B.-A."/>
            <person name="Ardell D.H."/>
            <person name="Canbaeck B."/>
            <person name="Eriksson A.-S."/>
            <person name="Naeslund A.K."/>
            <person name="Handley S.A."/>
            <person name="Huvet M."/>
            <person name="La Scola B."/>
            <person name="Holmberg M."/>
            <person name="Andersson S.G.E."/>
        </authorList>
    </citation>
    <scope>NUCLEOTIDE SEQUENCE [LARGE SCALE GENOMIC DNA]</scope>
    <source>
        <strain>Toulouse</strain>
    </source>
</reference>
<organism>
    <name type="scientific">Bartonella quintana (strain Toulouse)</name>
    <name type="common">Rochalimaea quintana</name>
    <dbReference type="NCBI Taxonomy" id="283165"/>
    <lineage>
        <taxon>Bacteria</taxon>
        <taxon>Pseudomonadati</taxon>
        <taxon>Pseudomonadota</taxon>
        <taxon>Alphaproteobacteria</taxon>
        <taxon>Hyphomicrobiales</taxon>
        <taxon>Bartonellaceae</taxon>
        <taxon>Bartonella</taxon>
    </lineage>
</organism>
<dbReference type="EC" id="2.5.1.145" evidence="1"/>
<dbReference type="EMBL" id="BX897700">
    <property type="protein sequence ID" value="CAF25834.1"/>
    <property type="molecule type" value="Genomic_DNA"/>
</dbReference>
<dbReference type="RefSeq" id="WP_011179128.1">
    <property type="nucleotide sequence ID" value="NC_005955.1"/>
</dbReference>
<dbReference type="SMR" id="Q6G0F4"/>
<dbReference type="KEGG" id="bqu:BQ03340"/>
<dbReference type="eggNOG" id="COG0682">
    <property type="taxonomic scope" value="Bacteria"/>
</dbReference>
<dbReference type="HOGENOM" id="CLU_013386_1_0_5"/>
<dbReference type="OrthoDB" id="871140at2"/>
<dbReference type="UniPathway" id="UPA00664"/>
<dbReference type="Proteomes" id="UP000000597">
    <property type="component" value="Chromosome"/>
</dbReference>
<dbReference type="GO" id="GO:0005886">
    <property type="term" value="C:plasma membrane"/>
    <property type="evidence" value="ECO:0007669"/>
    <property type="project" value="UniProtKB-SubCell"/>
</dbReference>
<dbReference type="GO" id="GO:0008961">
    <property type="term" value="F:phosphatidylglycerol-prolipoprotein diacylglyceryl transferase activity"/>
    <property type="evidence" value="ECO:0007669"/>
    <property type="project" value="UniProtKB-UniRule"/>
</dbReference>
<dbReference type="GO" id="GO:0042158">
    <property type="term" value="P:lipoprotein biosynthetic process"/>
    <property type="evidence" value="ECO:0007669"/>
    <property type="project" value="UniProtKB-UniRule"/>
</dbReference>
<dbReference type="HAMAP" id="MF_01147">
    <property type="entry name" value="Lgt"/>
    <property type="match status" value="1"/>
</dbReference>
<dbReference type="InterPro" id="IPR001640">
    <property type="entry name" value="Lgt"/>
</dbReference>
<dbReference type="NCBIfam" id="TIGR00544">
    <property type="entry name" value="lgt"/>
    <property type="match status" value="1"/>
</dbReference>
<dbReference type="PANTHER" id="PTHR30589:SF0">
    <property type="entry name" value="PHOSPHATIDYLGLYCEROL--PROLIPOPROTEIN DIACYLGLYCERYL TRANSFERASE"/>
    <property type="match status" value="1"/>
</dbReference>
<dbReference type="PANTHER" id="PTHR30589">
    <property type="entry name" value="PROLIPOPROTEIN DIACYLGLYCERYL TRANSFERASE"/>
    <property type="match status" value="1"/>
</dbReference>
<dbReference type="Pfam" id="PF01790">
    <property type="entry name" value="LGT"/>
    <property type="match status" value="1"/>
</dbReference>
<protein>
    <recommendedName>
        <fullName evidence="1">Phosphatidylglycerol--prolipoprotein diacylglyceryl transferase</fullName>
        <ecNumber evidence="1">2.5.1.145</ecNumber>
    </recommendedName>
</protein>
<sequence length="292" mass="33118">MNDLSCPAIAFPFFLDPVIIRLGPIALHWYGLGYVVGILFAWWYAQKLLKKHSLWNTNHPPMDKEKIGDFVVWSAISVVVGGRLGQVLVWDLAYYFNHPSAIIAVWDGGMSFHGGFIGIIIAMIWFARKNNINIRAMFDIVAAGAPIGIGIVRICNFINQELWGNITTLPWAICFPLDPYYLPRHPSQLYEAFMEGFLLFIILFIIIFAFKALKRPGTVAGTFMIGYAIARSISEVYRAPQEDPEWFSTLFHSTGFTYGMALSLPMLFFGIYLLLQAFKHKSTENGHPKRKN</sequence>
<comment type="function">
    <text evidence="1">Catalyzes the transfer of the diacylglyceryl group from phosphatidylglycerol to the sulfhydryl group of the N-terminal cysteine of a prolipoprotein, the first step in the formation of mature lipoproteins.</text>
</comment>
<comment type="catalytic activity">
    <reaction evidence="1">
        <text>L-cysteinyl-[prolipoprotein] + a 1,2-diacyl-sn-glycero-3-phospho-(1'-sn-glycerol) = an S-1,2-diacyl-sn-glyceryl-L-cysteinyl-[prolipoprotein] + sn-glycerol 1-phosphate + H(+)</text>
        <dbReference type="Rhea" id="RHEA:56712"/>
        <dbReference type="Rhea" id="RHEA-COMP:14679"/>
        <dbReference type="Rhea" id="RHEA-COMP:14680"/>
        <dbReference type="ChEBI" id="CHEBI:15378"/>
        <dbReference type="ChEBI" id="CHEBI:29950"/>
        <dbReference type="ChEBI" id="CHEBI:57685"/>
        <dbReference type="ChEBI" id="CHEBI:64716"/>
        <dbReference type="ChEBI" id="CHEBI:140658"/>
        <dbReference type="EC" id="2.5.1.145"/>
    </reaction>
</comment>
<comment type="pathway">
    <text evidence="1">Protein modification; lipoprotein biosynthesis (diacylglyceryl transfer).</text>
</comment>
<comment type="subcellular location">
    <subcellularLocation>
        <location evidence="1">Cell inner membrane</location>
        <topology evidence="1">Multi-pass membrane protein</topology>
    </subcellularLocation>
</comment>
<comment type="similarity">
    <text evidence="1">Belongs to the Lgt family.</text>
</comment>
<accession>Q6G0F4</accession>
<name>LGT_BARQU</name>
<evidence type="ECO:0000255" key="1">
    <source>
        <dbReference type="HAMAP-Rule" id="MF_01147"/>
    </source>
</evidence>
<keyword id="KW-0997">Cell inner membrane</keyword>
<keyword id="KW-1003">Cell membrane</keyword>
<keyword id="KW-0472">Membrane</keyword>
<keyword id="KW-0808">Transferase</keyword>
<keyword id="KW-0812">Transmembrane</keyword>
<keyword id="KW-1133">Transmembrane helix</keyword>
<proteinExistence type="inferred from homology"/>